<organism>
    <name type="scientific">Homo sapiens</name>
    <name type="common">Human</name>
    <dbReference type="NCBI Taxonomy" id="9606"/>
    <lineage>
        <taxon>Eukaryota</taxon>
        <taxon>Metazoa</taxon>
        <taxon>Chordata</taxon>
        <taxon>Craniata</taxon>
        <taxon>Vertebrata</taxon>
        <taxon>Euteleostomi</taxon>
        <taxon>Mammalia</taxon>
        <taxon>Eutheria</taxon>
        <taxon>Euarchontoglires</taxon>
        <taxon>Primates</taxon>
        <taxon>Haplorrhini</taxon>
        <taxon>Catarrhini</taxon>
        <taxon>Hominidae</taxon>
        <taxon>Homo</taxon>
    </lineage>
</organism>
<gene>
    <name type="primary">CLDND2</name>
</gene>
<sequence length="167" mass="17984">MGVKRSLQSGGILLSLVANVLMVLSTATNYWTRQQEGHSGLWQECNHGICSSIPCQTTLAVTVACMVLAVGVGVVGMVMGLRIRCDEGESLRGQTTSAFLFLGGLLLLTALIGYTVKNAWKNNVFFSWSYFSGWLALPFSILAGFCFLLADMIMQSTDAISGFPVCL</sequence>
<keyword id="KW-0472">Membrane</keyword>
<keyword id="KW-1185">Reference proteome</keyword>
<keyword id="KW-0812">Transmembrane</keyword>
<keyword id="KW-1133">Transmembrane helix</keyword>
<evidence type="ECO:0000255" key="1"/>
<evidence type="ECO:0000305" key="2"/>
<reference key="1">
    <citation type="journal article" date="2004" name="Genome Res.">
        <title>The status, quality, and expansion of the NIH full-length cDNA project: the Mammalian Gene Collection (MGC).</title>
        <authorList>
            <consortium name="The MGC Project Team"/>
        </authorList>
    </citation>
    <scope>NUCLEOTIDE SEQUENCE [LARGE SCALE MRNA]</scope>
    <source>
        <tissue>Testis</tissue>
    </source>
</reference>
<name>CLDN2_HUMAN</name>
<dbReference type="EMBL" id="BC029518">
    <property type="protein sequence ID" value="AAH29518.1"/>
    <property type="molecule type" value="mRNA"/>
</dbReference>
<dbReference type="CCDS" id="CCDS12829.1"/>
<dbReference type="RefSeq" id="NP_689566.1">
    <property type="nucleotide sequence ID" value="NM_152353.3"/>
</dbReference>
<dbReference type="RefSeq" id="XP_047294095.1">
    <property type="nucleotide sequence ID" value="XM_047438139.1"/>
</dbReference>
<dbReference type="RefSeq" id="XP_047294096.1">
    <property type="nucleotide sequence ID" value="XM_047438140.1"/>
</dbReference>
<dbReference type="RefSeq" id="XP_054175711.1">
    <property type="nucleotide sequence ID" value="XM_054319736.1"/>
</dbReference>
<dbReference type="RefSeq" id="XP_054175712.1">
    <property type="nucleotide sequence ID" value="XM_054319737.1"/>
</dbReference>
<dbReference type="SMR" id="Q8NHS1"/>
<dbReference type="BioGRID" id="125932">
    <property type="interactions" value="30"/>
</dbReference>
<dbReference type="FunCoup" id="Q8NHS1">
    <property type="interactions" value="319"/>
</dbReference>
<dbReference type="IntAct" id="Q8NHS1">
    <property type="interactions" value="25"/>
</dbReference>
<dbReference type="STRING" id="9606.ENSP00000291715"/>
<dbReference type="PhosphoSitePlus" id="Q8NHS1"/>
<dbReference type="BioMuta" id="CLDND2"/>
<dbReference type="DMDM" id="74760361"/>
<dbReference type="MassIVE" id="Q8NHS1"/>
<dbReference type="PaxDb" id="9606-ENSP00000291715"/>
<dbReference type="PeptideAtlas" id="Q8NHS1"/>
<dbReference type="ProteomicsDB" id="73745"/>
<dbReference type="Antibodypedia" id="32471">
    <property type="antibodies" value="46 antibodies from 13 providers"/>
</dbReference>
<dbReference type="DNASU" id="125875"/>
<dbReference type="Ensembl" id="ENST00000291715.5">
    <property type="protein sequence ID" value="ENSP00000291715.1"/>
    <property type="gene ID" value="ENSG00000160318.6"/>
</dbReference>
<dbReference type="Ensembl" id="ENST00000601435.1">
    <property type="protein sequence ID" value="ENSP00000472077.1"/>
    <property type="gene ID" value="ENSG00000160318.6"/>
</dbReference>
<dbReference type="GeneID" id="125875"/>
<dbReference type="KEGG" id="hsa:125875"/>
<dbReference type="MANE-Select" id="ENST00000291715.5">
    <property type="protein sequence ID" value="ENSP00000291715.1"/>
    <property type="RefSeq nucleotide sequence ID" value="NM_152353.3"/>
    <property type="RefSeq protein sequence ID" value="NP_689566.1"/>
</dbReference>
<dbReference type="UCSC" id="uc002pwi.1">
    <property type="organism name" value="human"/>
</dbReference>
<dbReference type="AGR" id="HGNC:28511"/>
<dbReference type="CTD" id="125875"/>
<dbReference type="GeneCards" id="CLDND2"/>
<dbReference type="HGNC" id="HGNC:28511">
    <property type="gene designation" value="CLDND2"/>
</dbReference>
<dbReference type="HPA" id="ENSG00000160318">
    <property type="expression patterns" value="Tissue enriched (testis)"/>
</dbReference>
<dbReference type="neXtProt" id="NX_Q8NHS1"/>
<dbReference type="OpenTargets" id="ENSG00000160318"/>
<dbReference type="PharmGKB" id="PA144596447"/>
<dbReference type="VEuPathDB" id="HostDB:ENSG00000160318"/>
<dbReference type="eggNOG" id="ENOG502SPH8">
    <property type="taxonomic scope" value="Eukaryota"/>
</dbReference>
<dbReference type="GeneTree" id="ENSGT01050000244814"/>
<dbReference type="HOGENOM" id="CLU_136294_0_0_1"/>
<dbReference type="InParanoid" id="Q8NHS1"/>
<dbReference type="OMA" id="NDVFFSW"/>
<dbReference type="OrthoDB" id="5967271at2759"/>
<dbReference type="PAN-GO" id="Q8NHS1">
    <property type="GO annotations" value="1 GO annotation based on evolutionary models"/>
</dbReference>
<dbReference type="PhylomeDB" id="Q8NHS1"/>
<dbReference type="TreeFam" id="TF330587"/>
<dbReference type="PathwayCommons" id="Q8NHS1"/>
<dbReference type="SignaLink" id="Q8NHS1"/>
<dbReference type="BioGRID-ORCS" id="125875">
    <property type="hits" value="18 hits in 1157 CRISPR screens"/>
</dbReference>
<dbReference type="GenomeRNAi" id="125875"/>
<dbReference type="Pharos" id="Q8NHS1">
    <property type="development level" value="Tdark"/>
</dbReference>
<dbReference type="PRO" id="PR:Q8NHS1"/>
<dbReference type="Proteomes" id="UP000005640">
    <property type="component" value="Chromosome 19"/>
</dbReference>
<dbReference type="RNAct" id="Q8NHS1">
    <property type="molecule type" value="protein"/>
</dbReference>
<dbReference type="Bgee" id="ENSG00000160318">
    <property type="expression patterns" value="Expressed in male germ line stem cell (sensu Vertebrata) in testis and 100 other cell types or tissues"/>
</dbReference>
<dbReference type="ExpressionAtlas" id="Q8NHS1">
    <property type="expression patterns" value="baseline and differential"/>
</dbReference>
<dbReference type="GO" id="GO:0005886">
    <property type="term" value="C:plasma membrane"/>
    <property type="evidence" value="ECO:0000318"/>
    <property type="project" value="GO_Central"/>
</dbReference>
<dbReference type="FunFam" id="1.20.140.150:FF:000032">
    <property type="entry name" value="Claudin domain containing 2"/>
    <property type="match status" value="1"/>
</dbReference>
<dbReference type="Gene3D" id="1.20.140.150">
    <property type="match status" value="1"/>
</dbReference>
<dbReference type="InterPro" id="IPR050579">
    <property type="entry name" value="PMP-22/EMP/MP20-like"/>
</dbReference>
<dbReference type="InterPro" id="IPR004031">
    <property type="entry name" value="PMP22/EMP/MP20/Claudin"/>
</dbReference>
<dbReference type="InterPro" id="IPR004032">
    <property type="entry name" value="PMP22_EMP_MP20"/>
</dbReference>
<dbReference type="PANTHER" id="PTHR10671:SF30">
    <property type="entry name" value="CLAUDIN DOMAIN-CONTAINING PROTEIN 2"/>
    <property type="match status" value="1"/>
</dbReference>
<dbReference type="PANTHER" id="PTHR10671">
    <property type="entry name" value="EPITHELIAL MEMBRANE PROTEIN-RELATED"/>
    <property type="match status" value="1"/>
</dbReference>
<dbReference type="Pfam" id="PF00822">
    <property type="entry name" value="PMP22_Claudin"/>
    <property type="match status" value="1"/>
</dbReference>
<dbReference type="PROSITE" id="PS01221">
    <property type="entry name" value="PMP22_1"/>
    <property type="match status" value="1"/>
</dbReference>
<protein>
    <recommendedName>
        <fullName>Claudin domain-containing protein 2</fullName>
    </recommendedName>
</protein>
<proteinExistence type="evidence at protein level"/>
<accession>Q8NHS1</accession>
<feature type="chain" id="PRO_0000271020" description="Claudin domain-containing protein 2">
    <location>
        <begin position="1"/>
        <end position="167"/>
    </location>
</feature>
<feature type="transmembrane region" description="Helical" evidence="1">
    <location>
        <begin position="7"/>
        <end position="27"/>
    </location>
</feature>
<feature type="transmembrane region" description="Helical" evidence="1">
    <location>
        <begin position="59"/>
        <end position="79"/>
    </location>
</feature>
<feature type="transmembrane region" description="Helical" evidence="1">
    <location>
        <begin position="96"/>
        <end position="116"/>
    </location>
</feature>
<feature type="transmembrane region" description="Helical" evidence="1">
    <location>
        <begin position="134"/>
        <end position="154"/>
    </location>
</feature>
<comment type="interaction">
    <interactant intactId="EBI-11959453">
        <id>Q8NHS1</id>
    </interactant>
    <interactant intactId="EBI-11959451">
        <id>Q8N6S4</id>
        <label>ANKRD13C</label>
    </interactant>
    <organismsDiffer>false</organismsDiffer>
    <experiments>3</experiments>
</comment>
<comment type="interaction">
    <interactant intactId="EBI-11959453">
        <id>Q8NHS1</id>
    </interactant>
    <interactant intactId="EBI-13059134">
        <id>Q13520</id>
        <label>AQP6</label>
    </interactant>
    <organismsDiffer>false</organismsDiffer>
    <experiments>3</experiments>
</comment>
<comment type="interaction">
    <interactant intactId="EBI-11959453">
        <id>Q8NHS1</id>
    </interactant>
    <interactant intactId="EBI-3895726">
        <id>P62952</id>
        <label>BLCAP</label>
    </interactant>
    <organismsDiffer>false</organismsDiffer>
    <experiments>3</experiments>
</comment>
<comment type="interaction">
    <interactant intactId="EBI-11959453">
        <id>Q8NHS1</id>
    </interactant>
    <interactant intactId="EBI-18013275">
        <id>Q7Z7G2</id>
        <label>CPLX4</label>
    </interactant>
    <organismsDiffer>false</organismsDiffer>
    <experiments>3</experiments>
</comment>
<comment type="interaction">
    <interactant intactId="EBI-11959453">
        <id>Q8NHS1</id>
    </interactant>
    <interactant intactId="EBI-3915253">
        <id>Q15125</id>
        <label>EBP</label>
    </interactant>
    <organismsDiffer>false</organismsDiffer>
    <experiments>3</experiments>
</comment>
<comment type="interaction">
    <interactant intactId="EBI-11959453">
        <id>Q8NHS1</id>
    </interactant>
    <interactant intactId="EBI-18535450">
        <id>Q9GZR5</id>
        <label>ELOVL4</label>
    </interactant>
    <organismsDiffer>false</organismsDiffer>
    <experiments>3</experiments>
</comment>
<comment type="interaction">
    <interactant intactId="EBI-11959453">
        <id>Q8NHS1</id>
    </interactant>
    <interactant intactId="EBI-781551">
        <id>Q9Y282</id>
        <label>ERGIC3</label>
    </interactant>
    <organismsDiffer>false</organismsDiffer>
    <experiments>3</experiments>
</comment>
<comment type="interaction">
    <interactant intactId="EBI-11959453">
        <id>Q8NHS1</id>
    </interactant>
    <interactant intactId="EBI-18304435">
        <id>Q5JX71</id>
        <label>FAM209A</label>
    </interactant>
    <organismsDiffer>false</organismsDiffer>
    <experiments>3</experiments>
</comment>
<comment type="interaction">
    <interactant intactId="EBI-11959453">
        <id>Q8NHS1</id>
    </interactant>
    <interactant intactId="EBI-18938272">
        <id>Q96KR6</id>
        <label>FAM210B</label>
    </interactant>
    <organismsDiffer>false</organismsDiffer>
    <experiments>3</experiments>
</comment>
<comment type="interaction">
    <interactant intactId="EBI-11959453">
        <id>Q8NHS1</id>
    </interactant>
    <interactant intactId="EBI-2833872">
        <id>O15552</id>
        <label>FFAR2</label>
    </interactant>
    <organismsDiffer>false</organismsDiffer>
    <experiments>3</experiments>
</comment>
<comment type="interaction">
    <interactant intactId="EBI-11959453">
        <id>Q8NHS1</id>
    </interactant>
    <interactant intactId="EBI-712073">
        <id>Q8NBJ4</id>
        <label>GOLM1</label>
    </interactant>
    <organismsDiffer>false</organismsDiffer>
    <experiments>3</experiments>
</comment>
<comment type="interaction">
    <interactant intactId="EBI-11959453">
        <id>Q8NHS1</id>
    </interactant>
    <interactant intactId="EBI-17231387">
        <id>Q6ZVE7</id>
        <label>GOLT1A</label>
    </interactant>
    <organismsDiffer>false</organismsDiffer>
    <experiments>3</experiments>
</comment>
<comment type="interaction">
    <interactant intactId="EBI-11959453">
        <id>Q8NHS1</id>
    </interactant>
    <interactant intactId="EBI-13345167">
        <id>Q8TDT2</id>
        <label>GPR152</label>
    </interactant>
    <organismsDiffer>false</organismsDiffer>
    <experiments>3</experiments>
</comment>
<comment type="interaction">
    <interactant intactId="EBI-11959453">
        <id>Q8NHS1</id>
    </interactant>
    <interactant intactId="EBI-2927498">
        <id>O60883</id>
        <label>GPR37L1</label>
    </interactant>
    <organismsDiffer>false</organismsDiffer>
    <experiments>3</experiments>
</comment>
<comment type="interaction">
    <interactant intactId="EBI-11959453">
        <id>Q8NHS1</id>
    </interactant>
    <interactant intactId="EBI-18053395">
        <id>Q7Z5P4</id>
        <label>HSD17B13</label>
    </interactant>
    <organismsDiffer>false</organismsDiffer>
    <experiments>3</experiments>
</comment>
<comment type="interaction">
    <interactant intactId="EBI-11959453">
        <id>Q8NHS1</id>
    </interactant>
    <interactant intactId="EBI-2820517">
        <id>Q8TAF8</id>
        <label>LHFPL5</label>
    </interactant>
    <organismsDiffer>false</organismsDiffer>
    <experiments>3</experiments>
</comment>
<comment type="interaction">
    <interactant intactId="EBI-11959453">
        <id>Q8NHS1</id>
    </interactant>
    <interactant intactId="EBI-3923617">
        <id>Q9H2K0</id>
        <label>MTIF3</label>
    </interactant>
    <organismsDiffer>false</organismsDiffer>
    <experiments>3</experiments>
</comment>
<comment type="interaction">
    <interactant intactId="EBI-11959453">
        <id>Q8NHS1</id>
    </interactant>
    <interactant intactId="EBI-17263240">
        <id>P15941-11</id>
        <label>MUC1</label>
    </interactant>
    <organismsDiffer>false</organismsDiffer>
    <experiments>3</experiments>
</comment>
<comment type="interaction">
    <interactant intactId="EBI-11959453">
        <id>Q8NHS1</id>
    </interactant>
    <interactant intactId="EBI-7545592">
        <id>Q9H6H4</id>
        <label>REEP4</label>
    </interactant>
    <organismsDiffer>false</organismsDiffer>
    <experiments>3</experiments>
</comment>
<comment type="interaction">
    <interactant intactId="EBI-11959453">
        <id>Q8NHS1</id>
    </interactant>
    <interactant intactId="EBI-10269209">
        <id>Q8NC24</id>
        <label>RELL2</label>
    </interactant>
    <organismsDiffer>false</organismsDiffer>
    <experiments>3</experiments>
</comment>
<comment type="interaction">
    <interactant intactId="EBI-11959453">
        <id>Q8NHS1</id>
    </interactant>
    <interactant intactId="EBI-3920694">
        <id>Q9NR31</id>
        <label>SAR1A</label>
    </interactant>
    <organismsDiffer>false</organismsDiffer>
    <experiments>3</experiments>
</comment>
<comment type="interaction">
    <interactant intactId="EBI-11959453">
        <id>Q8NHS1</id>
    </interactant>
    <interactant intactId="EBI-18159983">
        <id>Q3KNW5</id>
        <label>SLC10A6</label>
    </interactant>
    <organismsDiffer>false</organismsDiffer>
    <experiments>3</experiments>
</comment>
<comment type="interaction">
    <interactant intactId="EBI-11959453">
        <id>Q8NHS1</id>
    </interactant>
    <interactant intactId="EBI-8638294">
        <id>Q9NUH8</id>
        <label>TMEM14B</label>
    </interactant>
    <organismsDiffer>false</organismsDiffer>
    <experiments>3</experiments>
</comment>
<comment type="interaction">
    <interactant intactId="EBI-11959453">
        <id>Q8NHS1</id>
    </interactant>
    <interactant intactId="EBI-11742770">
        <id>Q96HE8</id>
        <label>TMEM80</label>
    </interactant>
    <organismsDiffer>false</organismsDiffer>
    <experiments>3</experiments>
</comment>
<comment type="interaction">
    <interactant intactId="EBI-11959453">
        <id>Q8NHS1</id>
    </interactant>
    <interactant intactId="EBI-11724433">
        <id>Q6ZT21</id>
        <label>TMPPE</label>
    </interactant>
    <organismsDiffer>false</organismsDiffer>
    <experiments>3</experiments>
</comment>
<comment type="subcellular location">
    <subcellularLocation>
        <location evidence="2">Membrane</location>
        <topology evidence="2">Multi-pass membrane protein</topology>
    </subcellularLocation>
</comment>
<comment type="similarity">
    <text evidence="2">Belongs to the PMP-22/EMP/MP20 family.</text>
</comment>